<geneLocation type="chloroplast"/>
<proteinExistence type="inferred from homology"/>
<evidence type="ECO:0000255" key="1">
    <source>
        <dbReference type="HAMAP-Rule" id="MF_01338"/>
    </source>
</evidence>
<name>RBL_PELGR</name>
<feature type="chain" id="PRO_0000062478" description="Ribulose bisphosphate carboxylase large chain">
    <location>
        <begin position="1" status="less than"/>
        <end position="463" status="greater than"/>
    </location>
</feature>
<feature type="active site" description="Proton acceptor" evidence="1">
    <location>
        <position position="166"/>
    </location>
</feature>
<feature type="active site" description="Proton acceptor" evidence="1">
    <location>
        <position position="285"/>
    </location>
</feature>
<feature type="binding site" description="in homodimeric partner" evidence="1">
    <location>
        <position position="114"/>
    </location>
    <ligand>
        <name>substrate</name>
    </ligand>
</feature>
<feature type="binding site" evidence="1">
    <location>
        <position position="164"/>
    </location>
    <ligand>
        <name>substrate</name>
    </ligand>
</feature>
<feature type="binding site" evidence="1">
    <location>
        <position position="168"/>
    </location>
    <ligand>
        <name>substrate</name>
    </ligand>
</feature>
<feature type="binding site" description="via carbamate group" evidence="1">
    <location>
        <position position="192"/>
    </location>
    <ligand>
        <name>Mg(2+)</name>
        <dbReference type="ChEBI" id="CHEBI:18420"/>
    </ligand>
</feature>
<feature type="binding site" evidence="1">
    <location>
        <position position="194"/>
    </location>
    <ligand>
        <name>Mg(2+)</name>
        <dbReference type="ChEBI" id="CHEBI:18420"/>
    </ligand>
</feature>
<feature type="binding site" evidence="1">
    <location>
        <position position="195"/>
    </location>
    <ligand>
        <name>Mg(2+)</name>
        <dbReference type="ChEBI" id="CHEBI:18420"/>
    </ligand>
</feature>
<feature type="binding site" evidence="1">
    <location>
        <position position="286"/>
    </location>
    <ligand>
        <name>substrate</name>
    </ligand>
</feature>
<feature type="binding site" evidence="1">
    <location>
        <position position="318"/>
    </location>
    <ligand>
        <name>substrate</name>
    </ligand>
</feature>
<feature type="binding site" evidence="1">
    <location>
        <position position="370"/>
    </location>
    <ligand>
        <name>substrate</name>
    </ligand>
</feature>
<feature type="site" description="Transition state stabilizer" evidence="1">
    <location>
        <position position="325"/>
    </location>
</feature>
<feature type="modified residue" description="N6,N6,N6-trimethyllysine" evidence="1">
    <location>
        <position position="5"/>
    </location>
</feature>
<feature type="modified residue" description="N6-carboxylysine" evidence="1">
    <location>
        <position position="192"/>
    </location>
</feature>
<feature type="disulfide bond" description="Interchain; in linked form" evidence="1">
    <location>
        <position position="238"/>
    </location>
</feature>
<feature type="non-terminal residue">
    <location>
        <position position="1"/>
    </location>
</feature>
<feature type="non-terminal residue">
    <location>
        <position position="463"/>
    </location>
</feature>
<organism>
    <name type="scientific">Pelargonium grandiflorum</name>
    <name type="common">Geranium</name>
    <name type="synonym">Geranium grandiflorum</name>
    <dbReference type="NCBI Taxonomy" id="4029"/>
    <lineage>
        <taxon>Eukaryota</taxon>
        <taxon>Viridiplantae</taxon>
        <taxon>Streptophyta</taxon>
        <taxon>Embryophyta</taxon>
        <taxon>Tracheophyta</taxon>
        <taxon>Spermatophyta</taxon>
        <taxon>Magnoliopsida</taxon>
        <taxon>eudicotyledons</taxon>
        <taxon>Gunneridae</taxon>
        <taxon>Pentapetalae</taxon>
        <taxon>rosids</taxon>
        <taxon>malvids</taxon>
        <taxon>Geraniales</taxon>
        <taxon>Geraniaceae</taxon>
        <taxon>Pelargonium</taxon>
    </lineage>
</organism>
<accession>P28417</accession>
<keyword id="KW-0113">Calvin cycle</keyword>
<keyword id="KW-0120">Carbon dioxide fixation</keyword>
<keyword id="KW-0150">Chloroplast</keyword>
<keyword id="KW-1015">Disulfide bond</keyword>
<keyword id="KW-0456">Lyase</keyword>
<keyword id="KW-0460">Magnesium</keyword>
<keyword id="KW-0479">Metal-binding</keyword>
<keyword id="KW-0488">Methylation</keyword>
<keyword id="KW-0503">Monooxygenase</keyword>
<keyword id="KW-0560">Oxidoreductase</keyword>
<keyword id="KW-0601">Photorespiration</keyword>
<keyword id="KW-0602">Photosynthesis</keyword>
<keyword id="KW-0934">Plastid</keyword>
<protein>
    <recommendedName>
        <fullName evidence="1">Ribulose bisphosphate carboxylase large chain</fullName>
        <shortName evidence="1">RuBisCO large subunit</shortName>
        <ecNumber evidence="1">4.1.1.39</ecNumber>
    </recommendedName>
</protein>
<dbReference type="EC" id="4.1.1.39" evidence="1"/>
<dbReference type="EMBL" id="L01920">
    <property type="protein sequence ID" value="AAA84261.2"/>
    <property type="molecule type" value="Genomic_DNA"/>
</dbReference>
<dbReference type="PIR" id="T01642">
    <property type="entry name" value="T01642"/>
</dbReference>
<dbReference type="SMR" id="P28417"/>
<dbReference type="GO" id="GO:0009507">
    <property type="term" value="C:chloroplast"/>
    <property type="evidence" value="ECO:0007669"/>
    <property type="project" value="UniProtKB-SubCell"/>
</dbReference>
<dbReference type="GO" id="GO:0000287">
    <property type="term" value="F:magnesium ion binding"/>
    <property type="evidence" value="ECO:0007669"/>
    <property type="project" value="InterPro"/>
</dbReference>
<dbReference type="GO" id="GO:0004497">
    <property type="term" value="F:monooxygenase activity"/>
    <property type="evidence" value="ECO:0007669"/>
    <property type="project" value="UniProtKB-KW"/>
</dbReference>
<dbReference type="GO" id="GO:0016984">
    <property type="term" value="F:ribulose-bisphosphate carboxylase activity"/>
    <property type="evidence" value="ECO:0007669"/>
    <property type="project" value="UniProtKB-EC"/>
</dbReference>
<dbReference type="GO" id="GO:0009853">
    <property type="term" value="P:photorespiration"/>
    <property type="evidence" value="ECO:0007669"/>
    <property type="project" value="UniProtKB-KW"/>
</dbReference>
<dbReference type="GO" id="GO:0019253">
    <property type="term" value="P:reductive pentose-phosphate cycle"/>
    <property type="evidence" value="ECO:0007669"/>
    <property type="project" value="UniProtKB-KW"/>
</dbReference>
<dbReference type="CDD" id="cd08212">
    <property type="entry name" value="RuBisCO_large_I"/>
    <property type="match status" value="1"/>
</dbReference>
<dbReference type="FunFam" id="3.20.20.110:FF:000001">
    <property type="entry name" value="Ribulose bisphosphate carboxylase large chain"/>
    <property type="match status" value="1"/>
</dbReference>
<dbReference type="FunFam" id="3.30.70.150:FF:000001">
    <property type="entry name" value="Ribulose bisphosphate carboxylase large chain"/>
    <property type="match status" value="1"/>
</dbReference>
<dbReference type="Gene3D" id="3.20.20.110">
    <property type="entry name" value="Ribulose bisphosphate carboxylase, large subunit, C-terminal domain"/>
    <property type="match status" value="1"/>
</dbReference>
<dbReference type="Gene3D" id="3.30.70.150">
    <property type="entry name" value="RuBisCO large subunit, N-terminal domain"/>
    <property type="match status" value="1"/>
</dbReference>
<dbReference type="HAMAP" id="MF_01338">
    <property type="entry name" value="RuBisCO_L_type1"/>
    <property type="match status" value="1"/>
</dbReference>
<dbReference type="InterPro" id="IPR033966">
    <property type="entry name" value="RuBisCO"/>
</dbReference>
<dbReference type="InterPro" id="IPR020878">
    <property type="entry name" value="RuBisCo_large_chain_AS"/>
</dbReference>
<dbReference type="InterPro" id="IPR000685">
    <property type="entry name" value="RuBisCO_lsu_C"/>
</dbReference>
<dbReference type="InterPro" id="IPR036376">
    <property type="entry name" value="RuBisCO_lsu_C_sf"/>
</dbReference>
<dbReference type="InterPro" id="IPR017443">
    <property type="entry name" value="RuBisCO_lsu_fd_N"/>
</dbReference>
<dbReference type="InterPro" id="IPR036422">
    <property type="entry name" value="RuBisCO_lsu_N_sf"/>
</dbReference>
<dbReference type="InterPro" id="IPR020888">
    <property type="entry name" value="RuBisCO_lsuI"/>
</dbReference>
<dbReference type="NCBIfam" id="NF003252">
    <property type="entry name" value="PRK04208.1"/>
    <property type="match status" value="1"/>
</dbReference>
<dbReference type="PANTHER" id="PTHR42704">
    <property type="entry name" value="RIBULOSE BISPHOSPHATE CARBOXYLASE"/>
    <property type="match status" value="1"/>
</dbReference>
<dbReference type="PANTHER" id="PTHR42704:SF16">
    <property type="entry name" value="RIBULOSE BISPHOSPHATE CARBOXYLASE LARGE CHAIN"/>
    <property type="match status" value="1"/>
</dbReference>
<dbReference type="Pfam" id="PF00016">
    <property type="entry name" value="RuBisCO_large"/>
    <property type="match status" value="1"/>
</dbReference>
<dbReference type="Pfam" id="PF02788">
    <property type="entry name" value="RuBisCO_large_N"/>
    <property type="match status" value="1"/>
</dbReference>
<dbReference type="SFLD" id="SFLDG01052">
    <property type="entry name" value="RuBisCO"/>
    <property type="match status" value="1"/>
</dbReference>
<dbReference type="SFLD" id="SFLDS00014">
    <property type="entry name" value="RuBisCO"/>
    <property type="match status" value="1"/>
</dbReference>
<dbReference type="SFLD" id="SFLDG00301">
    <property type="entry name" value="RuBisCO-like_proteins"/>
    <property type="match status" value="1"/>
</dbReference>
<dbReference type="SUPFAM" id="SSF51649">
    <property type="entry name" value="RuBisCo, C-terminal domain"/>
    <property type="match status" value="1"/>
</dbReference>
<dbReference type="SUPFAM" id="SSF54966">
    <property type="entry name" value="RuBisCO, large subunit, small (N-terminal) domain"/>
    <property type="match status" value="1"/>
</dbReference>
<dbReference type="PROSITE" id="PS00157">
    <property type="entry name" value="RUBISCO_LARGE"/>
    <property type="match status" value="1"/>
</dbReference>
<sequence length="463" mass="51206">SVGFKAGVKDYKLTYYTPDYETKDTDILAAFRVTPQPGVPPEEAGGAVAAESSTGTWTTVWTDGLTSLDRYKGRCYHIEPVAGEENQYIAYVAYPLDLFEEGSVTNMFTSIVGNVFGFKALRALRLEDLRIPPAYVKTFQGPPHGIQVERDKLNKYGRPLLGCTIKPKLGLSAKNYGRAVFECLRGGLDFTKDDENVNSQPFMRWRDRFLFCAEAIYKAQAETGEIKGHYLNATAGTCEEMMKRAVFARELGVPIVMHDYLTGGFTANTSLAHYCRDNGLLLHIHRAMHAVIDRQKNHGIHFRVLAKALRMSGGDHIHSGTVVGKLEGERDITLGFVDLLRDDFVEKDRSRGIYFTQDWVSLPGVLTVASGGIHVWHMPALTEIFGDDSVLQFGGGTLGHPWGNAPGAVANRVALEACVQARNEGRDLATEGNAIIRKACKWSTELAAACEVWKEIKFEFAAM</sequence>
<comment type="function">
    <text evidence="1">RuBisCO catalyzes two reactions: the carboxylation of D-ribulose 1,5-bisphosphate, the primary event in carbon dioxide fixation, as well as the oxidative fragmentation of the pentose substrate in the photorespiration process. Both reactions occur simultaneously and in competition at the same active site.</text>
</comment>
<comment type="catalytic activity">
    <reaction evidence="1">
        <text>2 (2R)-3-phosphoglycerate + 2 H(+) = D-ribulose 1,5-bisphosphate + CO2 + H2O</text>
        <dbReference type="Rhea" id="RHEA:23124"/>
        <dbReference type="ChEBI" id="CHEBI:15377"/>
        <dbReference type="ChEBI" id="CHEBI:15378"/>
        <dbReference type="ChEBI" id="CHEBI:16526"/>
        <dbReference type="ChEBI" id="CHEBI:57870"/>
        <dbReference type="ChEBI" id="CHEBI:58272"/>
        <dbReference type="EC" id="4.1.1.39"/>
    </reaction>
</comment>
<comment type="catalytic activity">
    <reaction evidence="1">
        <text>D-ribulose 1,5-bisphosphate + O2 = 2-phosphoglycolate + (2R)-3-phosphoglycerate + 2 H(+)</text>
        <dbReference type="Rhea" id="RHEA:36631"/>
        <dbReference type="ChEBI" id="CHEBI:15378"/>
        <dbReference type="ChEBI" id="CHEBI:15379"/>
        <dbReference type="ChEBI" id="CHEBI:57870"/>
        <dbReference type="ChEBI" id="CHEBI:58033"/>
        <dbReference type="ChEBI" id="CHEBI:58272"/>
    </reaction>
</comment>
<comment type="cofactor">
    <cofactor evidence="1">
        <name>Mg(2+)</name>
        <dbReference type="ChEBI" id="CHEBI:18420"/>
    </cofactor>
    <text evidence="1">Binds 1 Mg(2+) ion per subunit.</text>
</comment>
<comment type="subunit">
    <text evidence="1">Heterohexadecamer of 8 large chains and 8 small chains; disulfide-linked. The disulfide link is formed within the large subunit homodimers.</text>
</comment>
<comment type="subcellular location">
    <subcellularLocation>
        <location>Plastid</location>
        <location>Chloroplast</location>
    </subcellularLocation>
</comment>
<comment type="PTM">
    <text evidence="1">The disulfide bond which can form in the large chain dimeric partners within the hexadecamer appears to be associated with oxidative stress and protein turnover.</text>
</comment>
<comment type="miscellaneous">
    <text evidence="1">The basic functional RuBisCO is composed of a large chain homodimer in a 'head-to-tail' conformation. In form I RuBisCO this homodimer is arranged in a barrel-like tetramer with the small subunits forming a tetrameric 'cap' on each end of the 'barrel'.</text>
</comment>
<comment type="similarity">
    <text evidence="1">Belongs to the RuBisCO large chain family. Type I subfamily.</text>
</comment>
<gene>
    <name evidence="1" type="primary">rbcL</name>
</gene>
<reference key="1">
    <citation type="journal article" date="1992" name="Science">
        <title>Carnivorous plants: phylogeny and structural evolution.</title>
        <authorList>
            <person name="Albert V.A."/>
            <person name="Williams S.E."/>
            <person name="Chase M.W."/>
        </authorList>
    </citation>
    <scope>NUCLEOTIDE SEQUENCE [GENOMIC DNA]</scope>
</reference>